<sequence>MTDASGSERLKRTKDISESTPPSSLPDHLIRATAAEGKIRVVGLVSTQAVQEARERHKLSYVATVALGRAMSAALLLAANLKRRQARINLQLKGNGPLGGIYVDAGMDGTVRGYVSNPAIELPLTPESKLDVGQAVGRYGYLHVLRDLGYGQPYTSAVELVSGEVGDDISYYLSSSEQIPSAVLLGVNLDSQRVRAAGGVLMQLMPGAPASLIPEMEARLAKVEEFSPMLAYGGGLRELLQICLGDLDLKIAPEVRTIRFYCQCNSDRVKGALRMLGRDELIDMIRTDKGAEAVCQFCNEVYRISEDELRSIVAEMSANP</sequence>
<evidence type="ECO:0000255" key="1">
    <source>
        <dbReference type="HAMAP-Rule" id="MF_00117"/>
    </source>
</evidence>
<evidence type="ECO:0000256" key="2">
    <source>
        <dbReference type="SAM" id="MobiDB-lite"/>
    </source>
</evidence>
<proteinExistence type="inferred from homology"/>
<reference key="1">
    <citation type="journal article" date="2007" name="ISME J.">
        <title>Population level functional diversity in a microbial community revealed by comparative genomic and metagenomic analyses.</title>
        <authorList>
            <person name="Bhaya D."/>
            <person name="Grossman A.R."/>
            <person name="Steunou A.-S."/>
            <person name="Khuri N."/>
            <person name="Cohan F.M."/>
            <person name="Hamamura N."/>
            <person name="Melendrez M.C."/>
            <person name="Bateson M.M."/>
            <person name="Ward D.M."/>
            <person name="Heidelberg J.F."/>
        </authorList>
    </citation>
    <scope>NUCLEOTIDE SEQUENCE [LARGE SCALE GENOMIC DNA]</scope>
    <source>
        <strain>JA-3-3Ab</strain>
    </source>
</reference>
<protein>
    <recommendedName>
        <fullName evidence="1">33 kDa chaperonin</fullName>
    </recommendedName>
    <alternativeName>
        <fullName evidence="1">Heat shock protein 33 homolog</fullName>
        <shortName evidence="1">HSP33</shortName>
    </alternativeName>
</protein>
<accession>Q2JQD7</accession>
<comment type="function">
    <text evidence="1">Redox regulated molecular chaperone. Protects both thermally unfolding and oxidatively damaged proteins from irreversible aggregation. Plays an important role in the bacterial defense system toward oxidative stress.</text>
</comment>
<comment type="subcellular location">
    <subcellularLocation>
        <location evidence="1">Cytoplasm</location>
    </subcellularLocation>
</comment>
<comment type="PTM">
    <text evidence="1">Under oxidizing conditions two disulfide bonds are formed involving the reactive cysteines. Under reducing conditions zinc is bound to the reactive cysteines and the protein is inactive.</text>
</comment>
<comment type="similarity">
    <text evidence="1">Belongs to the HSP33 family.</text>
</comment>
<gene>
    <name evidence="1" type="primary">hslO</name>
    <name type="ordered locus">CYA_2467</name>
</gene>
<keyword id="KW-0143">Chaperone</keyword>
<keyword id="KW-0963">Cytoplasm</keyword>
<keyword id="KW-1015">Disulfide bond</keyword>
<keyword id="KW-0676">Redox-active center</keyword>
<keyword id="KW-0862">Zinc</keyword>
<name>HSLO_SYNJA</name>
<dbReference type="EMBL" id="CP000239">
    <property type="protein sequence ID" value="ABD00589.1"/>
    <property type="molecule type" value="Genomic_DNA"/>
</dbReference>
<dbReference type="SMR" id="Q2JQD7"/>
<dbReference type="STRING" id="321327.CYA_2467"/>
<dbReference type="KEGG" id="cya:CYA_2467"/>
<dbReference type="eggNOG" id="COG1281">
    <property type="taxonomic scope" value="Bacteria"/>
</dbReference>
<dbReference type="HOGENOM" id="CLU_054493_1_0_3"/>
<dbReference type="OrthoDB" id="9776534at2"/>
<dbReference type="Proteomes" id="UP000008818">
    <property type="component" value="Chromosome"/>
</dbReference>
<dbReference type="GO" id="GO:0005737">
    <property type="term" value="C:cytoplasm"/>
    <property type="evidence" value="ECO:0007669"/>
    <property type="project" value="UniProtKB-SubCell"/>
</dbReference>
<dbReference type="GO" id="GO:0044183">
    <property type="term" value="F:protein folding chaperone"/>
    <property type="evidence" value="ECO:0007669"/>
    <property type="project" value="TreeGrafter"/>
</dbReference>
<dbReference type="GO" id="GO:0051082">
    <property type="term" value="F:unfolded protein binding"/>
    <property type="evidence" value="ECO:0007669"/>
    <property type="project" value="UniProtKB-UniRule"/>
</dbReference>
<dbReference type="GO" id="GO:0042026">
    <property type="term" value="P:protein refolding"/>
    <property type="evidence" value="ECO:0007669"/>
    <property type="project" value="TreeGrafter"/>
</dbReference>
<dbReference type="CDD" id="cd00498">
    <property type="entry name" value="Hsp33"/>
    <property type="match status" value="1"/>
</dbReference>
<dbReference type="Gene3D" id="3.55.30.10">
    <property type="entry name" value="Hsp33 domain"/>
    <property type="match status" value="1"/>
</dbReference>
<dbReference type="Gene3D" id="3.90.1280.10">
    <property type="entry name" value="HSP33 redox switch-like"/>
    <property type="match status" value="1"/>
</dbReference>
<dbReference type="HAMAP" id="MF_00117">
    <property type="entry name" value="HslO"/>
    <property type="match status" value="1"/>
</dbReference>
<dbReference type="InterPro" id="IPR000397">
    <property type="entry name" value="Heat_shock_Hsp33"/>
</dbReference>
<dbReference type="InterPro" id="IPR016154">
    <property type="entry name" value="Heat_shock_Hsp33_C"/>
</dbReference>
<dbReference type="InterPro" id="IPR016153">
    <property type="entry name" value="Heat_shock_Hsp33_N"/>
</dbReference>
<dbReference type="NCBIfam" id="NF001033">
    <property type="entry name" value="PRK00114.1"/>
    <property type="match status" value="1"/>
</dbReference>
<dbReference type="PANTHER" id="PTHR30111">
    <property type="entry name" value="33 KDA CHAPERONIN"/>
    <property type="match status" value="1"/>
</dbReference>
<dbReference type="PANTHER" id="PTHR30111:SF1">
    <property type="entry name" value="33 KDA CHAPERONIN"/>
    <property type="match status" value="1"/>
</dbReference>
<dbReference type="Pfam" id="PF01430">
    <property type="entry name" value="HSP33"/>
    <property type="match status" value="1"/>
</dbReference>
<dbReference type="PIRSF" id="PIRSF005261">
    <property type="entry name" value="Heat_shock_Hsp33"/>
    <property type="match status" value="1"/>
</dbReference>
<dbReference type="SUPFAM" id="SSF64397">
    <property type="entry name" value="Hsp33 domain"/>
    <property type="match status" value="1"/>
</dbReference>
<dbReference type="SUPFAM" id="SSF118352">
    <property type="entry name" value="HSP33 redox switch-like"/>
    <property type="match status" value="1"/>
</dbReference>
<organism>
    <name type="scientific">Synechococcus sp. (strain JA-3-3Ab)</name>
    <name type="common">Cyanobacteria bacterium Yellowstone A-Prime</name>
    <dbReference type="NCBI Taxonomy" id="321327"/>
    <lineage>
        <taxon>Bacteria</taxon>
        <taxon>Bacillati</taxon>
        <taxon>Cyanobacteriota</taxon>
        <taxon>Cyanophyceae</taxon>
        <taxon>Synechococcales</taxon>
        <taxon>Synechococcaceae</taxon>
        <taxon>Synechococcus</taxon>
    </lineage>
</organism>
<feature type="chain" id="PRO_0000238105" description="33 kDa chaperonin">
    <location>
        <begin position="1"/>
        <end position="320"/>
    </location>
</feature>
<feature type="region of interest" description="Disordered" evidence="2">
    <location>
        <begin position="1"/>
        <end position="27"/>
    </location>
</feature>
<feature type="compositionally biased region" description="Basic and acidic residues" evidence="2">
    <location>
        <begin position="1"/>
        <end position="17"/>
    </location>
</feature>
<feature type="disulfide bond" description="Redox-active" evidence="1">
    <location>
        <begin position="262"/>
        <end position="264"/>
    </location>
</feature>
<feature type="disulfide bond" description="Redox-active" evidence="1">
    <location>
        <begin position="295"/>
        <end position="298"/>
    </location>
</feature>